<gene>
    <name evidence="1" type="primary">rpsG</name>
    <name type="ordered locus">Ajs_0274</name>
</gene>
<organism>
    <name type="scientific">Acidovorax sp. (strain JS42)</name>
    <dbReference type="NCBI Taxonomy" id="232721"/>
    <lineage>
        <taxon>Bacteria</taxon>
        <taxon>Pseudomonadati</taxon>
        <taxon>Pseudomonadota</taxon>
        <taxon>Betaproteobacteria</taxon>
        <taxon>Burkholderiales</taxon>
        <taxon>Comamonadaceae</taxon>
        <taxon>Acidovorax</taxon>
    </lineage>
</organism>
<dbReference type="EMBL" id="CP000539">
    <property type="protein sequence ID" value="ABM40528.1"/>
    <property type="molecule type" value="Genomic_DNA"/>
</dbReference>
<dbReference type="SMR" id="A1W2Q3"/>
<dbReference type="STRING" id="232721.Ajs_0274"/>
<dbReference type="KEGG" id="ajs:Ajs_0274"/>
<dbReference type="eggNOG" id="COG0049">
    <property type="taxonomic scope" value="Bacteria"/>
</dbReference>
<dbReference type="HOGENOM" id="CLU_072226_1_1_4"/>
<dbReference type="Proteomes" id="UP000000645">
    <property type="component" value="Chromosome"/>
</dbReference>
<dbReference type="GO" id="GO:0015935">
    <property type="term" value="C:small ribosomal subunit"/>
    <property type="evidence" value="ECO:0007669"/>
    <property type="project" value="InterPro"/>
</dbReference>
<dbReference type="GO" id="GO:0019843">
    <property type="term" value="F:rRNA binding"/>
    <property type="evidence" value="ECO:0007669"/>
    <property type="project" value="UniProtKB-UniRule"/>
</dbReference>
<dbReference type="GO" id="GO:0003735">
    <property type="term" value="F:structural constituent of ribosome"/>
    <property type="evidence" value="ECO:0007669"/>
    <property type="project" value="InterPro"/>
</dbReference>
<dbReference type="GO" id="GO:0000049">
    <property type="term" value="F:tRNA binding"/>
    <property type="evidence" value="ECO:0007669"/>
    <property type="project" value="UniProtKB-UniRule"/>
</dbReference>
<dbReference type="GO" id="GO:0006412">
    <property type="term" value="P:translation"/>
    <property type="evidence" value="ECO:0007669"/>
    <property type="project" value="UniProtKB-UniRule"/>
</dbReference>
<dbReference type="CDD" id="cd14869">
    <property type="entry name" value="uS7_Bacteria"/>
    <property type="match status" value="1"/>
</dbReference>
<dbReference type="FunFam" id="1.10.455.10:FF:000001">
    <property type="entry name" value="30S ribosomal protein S7"/>
    <property type="match status" value="1"/>
</dbReference>
<dbReference type="Gene3D" id="1.10.455.10">
    <property type="entry name" value="Ribosomal protein S7 domain"/>
    <property type="match status" value="1"/>
</dbReference>
<dbReference type="HAMAP" id="MF_00480_B">
    <property type="entry name" value="Ribosomal_uS7_B"/>
    <property type="match status" value="1"/>
</dbReference>
<dbReference type="InterPro" id="IPR000235">
    <property type="entry name" value="Ribosomal_uS7"/>
</dbReference>
<dbReference type="InterPro" id="IPR005717">
    <property type="entry name" value="Ribosomal_uS7_bac/org-type"/>
</dbReference>
<dbReference type="InterPro" id="IPR020606">
    <property type="entry name" value="Ribosomal_uS7_CS"/>
</dbReference>
<dbReference type="InterPro" id="IPR023798">
    <property type="entry name" value="Ribosomal_uS7_dom"/>
</dbReference>
<dbReference type="InterPro" id="IPR036823">
    <property type="entry name" value="Ribosomal_uS7_dom_sf"/>
</dbReference>
<dbReference type="NCBIfam" id="TIGR01029">
    <property type="entry name" value="rpsG_bact"/>
    <property type="match status" value="1"/>
</dbReference>
<dbReference type="PANTHER" id="PTHR11205">
    <property type="entry name" value="RIBOSOMAL PROTEIN S7"/>
    <property type="match status" value="1"/>
</dbReference>
<dbReference type="Pfam" id="PF00177">
    <property type="entry name" value="Ribosomal_S7"/>
    <property type="match status" value="1"/>
</dbReference>
<dbReference type="PIRSF" id="PIRSF002122">
    <property type="entry name" value="RPS7p_RPS7a_RPS5e_RPS7o"/>
    <property type="match status" value="1"/>
</dbReference>
<dbReference type="SUPFAM" id="SSF47973">
    <property type="entry name" value="Ribosomal protein S7"/>
    <property type="match status" value="1"/>
</dbReference>
<dbReference type="PROSITE" id="PS00052">
    <property type="entry name" value="RIBOSOMAL_S7"/>
    <property type="match status" value="1"/>
</dbReference>
<sequence>MPRRREVPKREILPDPKFGNVELSKFMNVIMEGGKKAVAERIIYGALDLISQKQPEKDALEVFVTAINNVKPMVEVKSRRVGGANYQVPVEVRPVRRLALSMRWIKEAARKRGEKSMAQRLANELMEATEGRGGAMKRRDEVHRMAEANKAFSHFRF</sequence>
<reference key="1">
    <citation type="submission" date="2006-12" db="EMBL/GenBank/DDBJ databases">
        <title>Complete sequence of chromosome 1 of Acidovorax sp. JS42.</title>
        <authorList>
            <person name="Copeland A."/>
            <person name="Lucas S."/>
            <person name="Lapidus A."/>
            <person name="Barry K."/>
            <person name="Detter J.C."/>
            <person name="Glavina del Rio T."/>
            <person name="Dalin E."/>
            <person name="Tice H."/>
            <person name="Pitluck S."/>
            <person name="Chertkov O."/>
            <person name="Brettin T."/>
            <person name="Bruce D."/>
            <person name="Han C."/>
            <person name="Tapia R."/>
            <person name="Gilna P."/>
            <person name="Schmutz J."/>
            <person name="Larimer F."/>
            <person name="Land M."/>
            <person name="Hauser L."/>
            <person name="Kyrpides N."/>
            <person name="Kim E."/>
            <person name="Stahl D."/>
            <person name="Richardson P."/>
        </authorList>
    </citation>
    <scope>NUCLEOTIDE SEQUENCE [LARGE SCALE GENOMIC DNA]</scope>
    <source>
        <strain>JS42</strain>
    </source>
</reference>
<proteinExistence type="inferred from homology"/>
<comment type="function">
    <text evidence="1">One of the primary rRNA binding proteins, it binds directly to 16S rRNA where it nucleates assembly of the head domain of the 30S subunit. Is located at the subunit interface close to the decoding center, probably blocks exit of the E-site tRNA.</text>
</comment>
<comment type="subunit">
    <text evidence="1">Part of the 30S ribosomal subunit. Contacts proteins S9 and S11.</text>
</comment>
<comment type="similarity">
    <text evidence="1">Belongs to the universal ribosomal protein uS7 family.</text>
</comment>
<name>RS7_ACISJ</name>
<accession>A1W2Q3</accession>
<keyword id="KW-0687">Ribonucleoprotein</keyword>
<keyword id="KW-0689">Ribosomal protein</keyword>
<keyword id="KW-0694">RNA-binding</keyword>
<keyword id="KW-0699">rRNA-binding</keyword>
<keyword id="KW-0820">tRNA-binding</keyword>
<feature type="chain" id="PRO_1000014136" description="Small ribosomal subunit protein uS7">
    <location>
        <begin position="1"/>
        <end position="157"/>
    </location>
</feature>
<evidence type="ECO:0000255" key="1">
    <source>
        <dbReference type="HAMAP-Rule" id="MF_00480"/>
    </source>
</evidence>
<evidence type="ECO:0000305" key="2"/>
<protein>
    <recommendedName>
        <fullName evidence="1">Small ribosomal subunit protein uS7</fullName>
    </recommendedName>
    <alternativeName>
        <fullName evidence="2">30S ribosomal protein S7</fullName>
    </alternativeName>
</protein>